<feature type="chain" id="PRO_0000148208" description="Phosphoribosylformylglycinamidine cyclo-ligase">
    <location>
        <begin position="1"/>
        <end position="352"/>
    </location>
</feature>
<reference key="1">
    <citation type="journal article" date="2003" name="Proc. Natl. Acad. Sci. U.S.A.">
        <title>Complete genome sequence of the Q-fever pathogen, Coxiella burnetii.</title>
        <authorList>
            <person name="Seshadri R."/>
            <person name="Paulsen I.T."/>
            <person name="Eisen J.A."/>
            <person name="Read T.D."/>
            <person name="Nelson K.E."/>
            <person name="Nelson W.C."/>
            <person name="Ward N.L."/>
            <person name="Tettelin H."/>
            <person name="Davidsen T.M."/>
            <person name="Beanan M.J."/>
            <person name="DeBoy R.T."/>
            <person name="Daugherty S.C."/>
            <person name="Brinkac L.M."/>
            <person name="Madupu R."/>
            <person name="Dodson R.J."/>
            <person name="Khouri H.M."/>
            <person name="Lee K.H."/>
            <person name="Carty H.A."/>
            <person name="Scanlan D."/>
            <person name="Heinzen R.A."/>
            <person name="Thompson H.A."/>
            <person name="Samuel J.E."/>
            <person name="Fraser C.M."/>
            <person name="Heidelberg J.F."/>
        </authorList>
    </citation>
    <scope>NUCLEOTIDE SEQUENCE [LARGE SCALE GENOMIC DNA]</scope>
    <source>
        <strain>RSA 493 / Nine Mile phase I</strain>
    </source>
</reference>
<accession>Q83AZ0</accession>
<name>PUR5_COXBU</name>
<organism>
    <name type="scientific">Coxiella burnetii (strain RSA 493 / Nine Mile phase I)</name>
    <dbReference type="NCBI Taxonomy" id="227377"/>
    <lineage>
        <taxon>Bacteria</taxon>
        <taxon>Pseudomonadati</taxon>
        <taxon>Pseudomonadota</taxon>
        <taxon>Gammaproteobacteria</taxon>
        <taxon>Legionellales</taxon>
        <taxon>Coxiellaceae</taxon>
        <taxon>Coxiella</taxon>
    </lineage>
</organism>
<proteinExistence type="inferred from homology"/>
<sequence>MQSMPDSTRHPPLSYCKAGVDIEKAADLVEAIKPIAKRTRRPGVLSGIGGFGGLFELPRGYKQPVLVSGTDGVGTKLKLAVELNRHDTIGIDLVAMCVNDVITTGAEPLFFLDYYATGHLNNEQAKQILTGIGAGCELAEVALIGGETAEMPGLYRQKDYDLAGFCVGVVEKEKIIDGSRVRVGDALIGIASSGPHSNGYSLIRKILARAKIPLSQSFENKSLADGLLAPTRIYVKTIKRLFSEINVHALAHITGGGLIENVPRVLPSYTQAVIDSNGWEWPAIFHWLQKQGKVPIEEMWRTFNMGVGMVLCLDKKEVRKTLELLAALGETAWILGEIQSSSEEQPRVTITP</sequence>
<comment type="catalytic activity">
    <reaction evidence="1">
        <text>2-formamido-N(1)-(5-O-phospho-beta-D-ribosyl)acetamidine + ATP = 5-amino-1-(5-phospho-beta-D-ribosyl)imidazole + ADP + phosphate + H(+)</text>
        <dbReference type="Rhea" id="RHEA:23032"/>
        <dbReference type="ChEBI" id="CHEBI:15378"/>
        <dbReference type="ChEBI" id="CHEBI:30616"/>
        <dbReference type="ChEBI" id="CHEBI:43474"/>
        <dbReference type="ChEBI" id="CHEBI:137981"/>
        <dbReference type="ChEBI" id="CHEBI:147287"/>
        <dbReference type="ChEBI" id="CHEBI:456216"/>
        <dbReference type="EC" id="6.3.3.1"/>
    </reaction>
</comment>
<comment type="pathway">
    <text evidence="1">Purine metabolism; IMP biosynthesis via de novo pathway; 5-amino-1-(5-phospho-D-ribosyl)imidazole from N(2)-formyl-N(1)-(5-phospho-D-ribosyl)glycinamide: step 2/2.</text>
</comment>
<comment type="subcellular location">
    <subcellularLocation>
        <location evidence="1">Cytoplasm</location>
    </subcellularLocation>
</comment>
<comment type="similarity">
    <text evidence="1">Belongs to the AIR synthase family.</text>
</comment>
<comment type="sequence caution" evidence="2">
    <conflict type="erroneous initiation">
        <sequence resource="EMBL-CDS" id="AAO91230"/>
    </conflict>
</comment>
<dbReference type="EC" id="6.3.3.1" evidence="1"/>
<dbReference type="EMBL" id="AE016828">
    <property type="protein sequence ID" value="AAO91230.2"/>
    <property type="status" value="ALT_INIT"/>
    <property type="molecule type" value="Genomic_DNA"/>
</dbReference>
<dbReference type="RefSeq" id="NP_820716.2">
    <property type="nucleotide sequence ID" value="NC_002971.3"/>
</dbReference>
<dbReference type="SMR" id="Q83AZ0"/>
<dbReference type="STRING" id="227377.CBU_1736"/>
<dbReference type="EnsemblBacteria" id="AAO91230">
    <property type="protein sequence ID" value="AAO91230"/>
    <property type="gene ID" value="CBU_1736"/>
</dbReference>
<dbReference type="GeneID" id="1209647"/>
<dbReference type="KEGG" id="cbu:CBU_1736"/>
<dbReference type="PATRIC" id="fig|227377.7.peg.1726"/>
<dbReference type="eggNOG" id="COG0150">
    <property type="taxonomic scope" value="Bacteria"/>
</dbReference>
<dbReference type="HOGENOM" id="CLU_047116_0_0_6"/>
<dbReference type="OrthoDB" id="9777881at2"/>
<dbReference type="UniPathway" id="UPA00074">
    <property type="reaction ID" value="UER00129"/>
</dbReference>
<dbReference type="Proteomes" id="UP000002671">
    <property type="component" value="Chromosome"/>
</dbReference>
<dbReference type="GO" id="GO:0005829">
    <property type="term" value="C:cytosol"/>
    <property type="evidence" value="ECO:0000318"/>
    <property type="project" value="GO_Central"/>
</dbReference>
<dbReference type="GO" id="GO:0005524">
    <property type="term" value="F:ATP binding"/>
    <property type="evidence" value="ECO:0007669"/>
    <property type="project" value="UniProtKB-KW"/>
</dbReference>
<dbReference type="GO" id="GO:0004637">
    <property type="term" value="F:phosphoribosylamine-glycine ligase activity"/>
    <property type="evidence" value="ECO:0000318"/>
    <property type="project" value="GO_Central"/>
</dbReference>
<dbReference type="GO" id="GO:0004641">
    <property type="term" value="F:phosphoribosylformylglycinamidine cyclo-ligase activity"/>
    <property type="evidence" value="ECO:0000318"/>
    <property type="project" value="GO_Central"/>
</dbReference>
<dbReference type="GO" id="GO:0006189">
    <property type="term" value="P:'de novo' IMP biosynthetic process"/>
    <property type="evidence" value="ECO:0007669"/>
    <property type="project" value="UniProtKB-UniRule"/>
</dbReference>
<dbReference type="GO" id="GO:0046084">
    <property type="term" value="P:adenine biosynthetic process"/>
    <property type="evidence" value="ECO:0000318"/>
    <property type="project" value="GO_Central"/>
</dbReference>
<dbReference type="GO" id="GO:0006164">
    <property type="term" value="P:purine nucleotide biosynthetic process"/>
    <property type="evidence" value="ECO:0000318"/>
    <property type="project" value="GO_Central"/>
</dbReference>
<dbReference type="CDD" id="cd02196">
    <property type="entry name" value="PurM"/>
    <property type="match status" value="1"/>
</dbReference>
<dbReference type="FunFam" id="3.30.1330.10:FF:000001">
    <property type="entry name" value="Phosphoribosylformylglycinamidine cyclo-ligase"/>
    <property type="match status" value="1"/>
</dbReference>
<dbReference type="FunFam" id="3.90.650.10:FF:000001">
    <property type="entry name" value="Phosphoribosylformylglycinamidine cyclo-ligase"/>
    <property type="match status" value="1"/>
</dbReference>
<dbReference type="Gene3D" id="3.90.650.10">
    <property type="entry name" value="PurM-like C-terminal domain"/>
    <property type="match status" value="1"/>
</dbReference>
<dbReference type="Gene3D" id="3.30.1330.10">
    <property type="entry name" value="PurM-like, N-terminal domain"/>
    <property type="match status" value="1"/>
</dbReference>
<dbReference type="HAMAP" id="MF_00741">
    <property type="entry name" value="AIRS"/>
    <property type="match status" value="1"/>
</dbReference>
<dbReference type="InterPro" id="IPR010918">
    <property type="entry name" value="PurM-like_C_dom"/>
</dbReference>
<dbReference type="InterPro" id="IPR036676">
    <property type="entry name" value="PurM-like_C_sf"/>
</dbReference>
<dbReference type="InterPro" id="IPR016188">
    <property type="entry name" value="PurM-like_N"/>
</dbReference>
<dbReference type="InterPro" id="IPR036921">
    <property type="entry name" value="PurM-like_N_sf"/>
</dbReference>
<dbReference type="InterPro" id="IPR004733">
    <property type="entry name" value="PurM_cligase"/>
</dbReference>
<dbReference type="NCBIfam" id="TIGR00878">
    <property type="entry name" value="purM"/>
    <property type="match status" value="1"/>
</dbReference>
<dbReference type="PANTHER" id="PTHR10520:SF12">
    <property type="entry name" value="TRIFUNCTIONAL PURINE BIOSYNTHETIC PROTEIN ADENOSINE-3"/>
    <property type="match status" value="1"/>
</dbReference>
<dbReference type="PANTHER" id="PTHR10520">
    <property type="entry name" value="TRIFUNCTIONAL PURINE BIOSYNTHETIC PROTEIN ADENOSINE-3-RELATED"/>
    <property type="match status" value="1"/>
</dbReference>
<dbReference type="Pfam" id="PF00586">
    <property type="entry name" value="AIRS"/>
    <property type="match status" value="1"/>
</dbReference>
<dbReference type="Pfam" id="PF02769">
    <property type="entry name" value="AIRS_C"/>
    <property type="match status" value="1"/>
</dbReference>
<dbReference type="SUPFAM" id="SSF56042">
    <property type="entry name" value="PurM C-terminal domain-like"/>
    <property type="match status" value="1"/>
</dbReference>
<dbReference type="SUPFAM" id="SSF55326">
    <property type="entry name" value="PurM N-terminal domain-like"/>
    <property type="match status" value="1"/>
</dbReference>
<protein>
    <recommendedName>
        <fullName evidence="1">Phosphoribosylformylglycinamidine cyclo-ligase</fullName>
        <ecNumber evidence="1">6.3.3.1</ecNumber>
    </recommendedName>
    <alternativeName>
        <fullName evidence="1">AIR synthase</fullName>
    </alternativeName>
    <alternativeName>
        <fullName evidence="1">AIRS</fullName>
    </alternativeName>
    <alternativeName>
        <fullName evidence="1">Phosphoribosyl-aminoimidazole synthetase</fullName>
    </alternativeName>
</protein>
<gene>
    <name evidence="1" type="primary">purM</name>
    <name type="ordered locus">CBU_1736</name>
</gene>
<keyword id="KW-0067">ATP-binding</keyword>
<keyword id="KW-0963">Cytoplasm</keyword>
<keyword id="KW-0436">Ligase</keyword>
<keyword id="KW-0547">Nucleotide-binding</keyword>
<keyword id="KW-0658">Purine biosynthesis</keyword>
<keyword id="KW-1185">Reference proteome</keyword>
<evidence type="ECO:0000255" key="1">
    <source>
        <dbReference type="HAMAP-Rule" id="MF_00741"/>
    </source>
</evidence>
<evidence type="ECO:0000305" key="2"/>